<sequence>MAVLTHNEASQKVDELRKKLDKWADDYYAKDAPVVEDAVYDKTYQELVELEEQFPDLVTADSITQRVGGEIKSDLSKVEHPVPMLSMGDVFSKDELKEFDERITKLVGHSVAYNVELKIDGLSLSLEYTDGKLTRASTRGNGRVGEDVTANAKFIKDIPQTLPEPLTTEVRGECYMEKEAFATLNAERDEKGEQVFANPRNAAAGSLRQLDARITKKRNLSTFIYTWVNPPRNITSQHQAIDEMNRLGFHTNQSGRRFESMDEVFKFIDEYTAKRNDLSYGIDGIVLKVDDLSLQNELGNTVKVPRWEIAYKFPPEEQETVVRNIEWTVGRTGVVTPTAVMDPVKLAGTIVSRASLHNPDYLREKGVRIGDTVKLHKAGDIIPEISSVVLSKRPKDSKPYEIPNVCPSCGETLVHLQDEVALRCINPMCPAQIEEGIIHFASRGAMNIMGLGPRIVKQLIDKGFINDVADLYQLTPDQLGQLDHFKEKSITNLLSSIENSKQNSAELLLYGLGIDHVGAKAARLILEKYKNLEKVSQLTVPELTSIDTIGETIAESLTAYFNQPSAQKLLQELRDSGLNMEYLGTVEEEAPDNFFKEKTVVLTGKLSAFTRSEFTKKLQDLGAKVTGSVSKKTDYLIYGADAGSKKDKAEKLQVPMLTEQEAIAKIEK</sequence>
<comment type="function">
    <text evidence="1">DNA ligase that catalyzes the formation of phosphodiester linkages between 5'-phosphoryl and 3'-hydroxyl groups in double-stranded DNA using NAD as a coenzyme and as the energy source for the reaction. It is essential for DNA replication and repair of damaged DNA.</text>
</comment>
<comment type="catalytic activity">
    <reaction evidence="1">
        <text>NAD(+) + (deoxyribonucleotide)n-3'-hydroxyl + 5'-phospho-(deoxyribonucleotide)m = (deoxyribonucleotide)n+m + AMP + beta-nicotinamide D-nucleotide.</text>
        <dbReference type="EC" id="6.5.1.2"/>
    </reaction>
</comment>
<comment type="cofactor">
    <cofactor evidence="1">
        <name>Mg(2+)</name>
        <dbReference type="ChEBI" id="CHEBI:18420"/>
    </cofactor>
    <cofactor evidence="1">
        <name>Mn(2+)</name>
        <dbReference type="ChEBI" id="CHEBI:29035"/>
    </cofactor>
</comment>
<comment type="similarity">
    <text evidence="1">Belongs to the NAD-dependent DNA ligase family. LigA subfamily.</text>
</comment>
<protein>
    <recommendedName>
        <fullName evidence="1">DNA ligase</fullName>
        <ecNumber evidence="1">6.5.1.2</ecNumber>
    </recommendedName>
    <alternativeName>
        <fullName evidence="1">Polydeoxyribonucleotide synthase [NAD(+)]</fullName>
    </alternativeName>
</protein>
<keyword id="KW-0227">DNA damage</keyword>
<keyword id="KW-0234">DNA repair</keyword>
<keyword id="KW-0235">DNA replication</keyword>
<keyword id="KW-0436">Ligase</keyword>
<keyword id="KW-0460">Magnesium</keyword>
<keyword id="KW-0464">Manganese</keyword>
<keyword id="KW-0479">Metal-binding</keyword>
<keyword id="KW-0520">NAD</keyword>
<keyword id="KW-0862">Zinc</keyword>
<feature type="chain" id="PRO_0000313277" description="DNA ligase">
    <location>
        <begin position="1"/>
        <end position="668"/>
    </location>
</feature>
<feature type="domain" description="BRCT" evidence="1">
    <location>
        <begin position="590"/>
        <end position="668"/>
    </location>
</feature>
<feature type="active site" description="N6-AMP-lysine intermediate" evidence="1">
    <location>
        <position position="118"/>
    </location>
</feature>
<feature type="binding site" evidence="1">
    <location>
        <begin position="37"/>
        <end position="41"/>
    </location>
    <ligand>
        <name>NAD(+)</name>
        <dbReference type="ChEBI" id="CHEBI:57540"/>
    </ligand>
</feature>
<feature type="binding site" evidence="1">
    <location>
        <begin position="86"/>
        <end position="87"/>
    </location>
    <ligand>
        <name>NAD(+)</name>
        <dbReference type="ChEBI" id="CHEBI:57540"/>
    </ligand>
</feature>
<feature type="binding site" evidence="1">
    <location>
        <position position="116"/>
    </location>
    <ligand>
        <name>NAD(+)</name>
        <dbReference type="ChEBI" id="CHEBI:57540"/>
    </ligand>
</feature>
<feature type="binding site" evidence="1">
    <location>
        <position position="139"/>
    </location>
    <ligand>
        <name>NAD(+)</name>
        <dbReference type="ChEBI" id="CHEBI:57540"/>
    </ligand>
</feature>
<feature type="binding site" evidence="1">
    <location>
        <position position="173"/>
    </location>
    <ligand>
        <name>NAD(+)</name>
        <dbReference type="ChEBI" id="CHEBI:57540"/>
    </ligand>
</feature>
<feature type="binding site" evidence="1">
    <location>
        <position position="288"/>
    </location>
    <ligand>
        <name>NAD(+)</name>
        <dbReference type="ChEBI" id="CHEBI:57540"/>
    </ligand>
</feature>
<feature type="binding site" evidence="1">
    <location>
        <position position="312"/>
    </location>
    <ligand>
        <name>NAD(+)</name>
        <dbReference type="ChEBI" id="CHEBI:57540"/>
    </ligand>
</feature>
<feature type="binding site" evidence="1">
    <location>
        <position position="406"/>
    </location>
    <ligand>
        <name>Zn(2+)</name>
        <dbReference type="ChEBI" id="CHEBI:29105"/>
    </ligand>
</feature>
<feature type="binding site" evidence="1">
    <location>
        <position position="409"/>
    </location>
    <ligand>
        <name>Zn(2+)</name>
        <dbReference type="ChEBI" id="CHEBI:29105"/>
    </ligand>
</feature>
<feature type="binding site" evidence="1">
    <location>
        <position position="424"/>
    </location>
    <ligand>
        <name>Zn(2+)</name>
        <dbReference type="ChEBI" id="CHEBI:29105"/>
    </ligand>
</feature>
<feature type="binding site" evidence="1">
    <location>
        <position position="429"/>
    </location>
    <ligand>
        <name>Zn(2+)</name>
        <dbReference type="ChEBI" id="CHEBI:29105"/>
    </ligand>
</feature>
<reference key="1">
    <citation type="journal article" date="2004" name="Proc. Natl. Acad. Sci. U.S.A.">
        <title>The genome sequence of the probiotic intestinal bacterium Lactobacillus johnsonii NCC 533.</title>
        <authorList>
            <person name="Pridmore R.D."/>
            <person name="Berger B."/>
            <person name="Desiere F."/>
            <person name="Vilanova D."/>
            <person name="Barretto C."/>
            <person name="Pittet A.-C."/>
            <person name="Zwahlen M.-C."/>
            <person name="Rouvet M."/>
            <person name="Altermann E."/>
            <person name="Barrangou R."/>
            <person name="Mollet B."/>
            <person name="Mercenier A."/>
            <person name="Klaenhammer T."/>
            <person name="Arigoni F."/>
            <person name="Schell M.A."/>
        </authorList>
    </citation>
    <scope>NUCLEOTIDE SEQUENCE [LARGE SCALE GENOMIC DNA]</scope>
    <source>
        <strain>CNCM I-1225 / La1 / NCC 533</strain>
    </source>
</reference>
<organism>
    <name type="scientific">Lactobacillus johnsonii (strain CNCM I-12250 / La1 / NCC 533)</name>
    <dbReference type="NCBI Taxonomy" id="257314"/>
    <lineage>
        <taxon>Bacteria</taxon>
        <taxon>Bacillati</taxon>
        <taxon>Bacillota</taxon>
        <taxon>Bacilli</taxon>
        <taxon>Lactobacillales</taxon>
        <taxon>Lactobacillaceae</taxon>
        <taxon>Lactobacillus</taxon>
    </lineage>
</organism>
<accession>Q74I49</accession>
<evidence type="ECO:0000255" key="1">
    <source>
        <dbReference type="HAMAP-Rule" id="MF_01588"/>
    </source>
</evidence>
<dbReference type="EC" id="6.5.1.2" evidence="1"/>
<dbReference type="EMBL" id="AE017198">
    <property type="protein sequence ID" value="AAS09491.1"/>
    <property type="molecule type" value="Genomic_DNA"/>
</dbReference>
<dbReference type="RefSeq" id="WP_011162396.1">
    <property type="nucleotide sequence ID" value="NC_005362.1"/>
</dbReference>
<dbReference type="SMR" id="Q74I49"/>
<dbReference type="KEGG" id="ljo:LJ_1720"/>
<dbReference type="PATRIC" id="fig|257314.6.peg.1543"/>
<dbReference type="eggNOG" id="COG0272">
    <property type="taxonomic scope" value="Bacteria"/>
</dbReference>
<dbReference type="HOGENOM" id="CLU_007764_2_1_9"/>
<dbReference type="Proteomes" id="UP000000581">
    <property type="component" value="Chromosome"/>
</dbReference>
<dbReference type="GO" id="GO:0005829">
    <property type="term" value="C:cytosol"/>
    <property type="evidence" value="ECO:0007669"/>
    <property type="project" value="TreeGrafter"/>
</dbReference>
<dbReference type="GO" id="GO:0003911">
    <property type="term" value="F:DNA ligase (NAD+) activity"/>
    <property type="evidence" value="ECO:0007669"/>
    <property type="project" value="UniProtKB-UniRule"/>
</dbReference>
<dbReference type="GO" id="GO:0046872">
    <property type="term" value="F:metal ion binding"/>
    <property type="evidence" value="ECO:0007669"/>
    <property type="project" value="UniProtKB-KW"/>
</dbReference>
<dbReference type="GO" id="GO:0006281">
    <property type="term" value="P:DNA repair"/>
    <property type="evidence" value="ECO:0007669"/>
    <property type="project" value="UniProtKB-KW"/>
</dbReference>
<dbReference type="GO" id="GO:0006260">
    <property type="term" value="P:DNA replication"/>
    <property type="evidence" value="ECO:0007669"/>
    <property type="project" value="UniProtKB-KW"/>
</dbReference>
<dbReference type="CDD" id="cd17748">
    <property type="entry name" value="BRCT_DNA_ligase_like"/>
    <property type="match status" value="1"/>
</dbReference>
<dbReference type="CDD" id="cd00114">
    <property type="entry name" value="LIGANc"/>
    <property type="match status" value="1"/>
</dbReference>
<dbReference type="FunFam" id="1.10.150.20:FF:000007">
    <property type="entry name" value="DNA ligase"/>
    <property type="match status" value="1"/>
</dbReference>
<dbReference type="FunFam" id="2.40.50.140:FF:000012">
    <property type="entry name" value="DNA ligase"/>
    <property type="match status" value="1"/>
</dbReference>
<dbReference type="FunFam" id="3.30.470.30:FF:000001">
    <property type="entry name" value="DNA ligase"/>
    <property type="match status" value="1"/>
</dbReference>
<dbReference type="Gene3D" id="6.20.10.30">
    <property type="match status" value="1"/>
</dbReference>
<dbReference type="Gene3D" id="1.10.150.20">
    <property type="entry name" value="5' to 3' exonuclease, C-terminal subdomain"/>
    <property type="match status" value="2"/>
</dbReference>
<dbReference type="Gene3D" id="3.40.50.10190">
    <property type="entry name" value="BRCT domain"/>
    <property type="match status" value="1"/>
</dbReference>
<dbReference type="Gene3D" id="3.30.470.30">
    <property type="entry name" value="DNA ligase/mRNA capping enzyme"/>
    <property type="match status" value="1"/>
</dbReference>
<dbReference type="Gene3D" id="1.10.287.610">
    <property type="entry name" value="Helix hairpin bin"/>
    <property type="match status" value="1"/>
</dbReference>
<dbReference type="Gene3D" id="2.40.50.140">
    <property type="entry name" value="Nucleic acid-binding proteins"/>
    <property type="match status" value="1"/>
</dbReference>
<dbReference type="HAMAP" id="MF_01588">
    <property type="entry name" value="DNA_ligase_A"/>
    <property type="match status" value="1"/>
</dbReference>
<dbReference type="InterPro" id="IPR001357">
    <property type="entry name" value="BRCT_dom"/>
</dbReference>
<dbReference type="InterPro" id="IPR036420">
    <property type="entry name" value="BRCT_dom_sf"/>
</dbReference>
<dbReference type="InterPro" id="IPR041663">
    <property type="entry name" value="DisA/LigA_HHH"/>
</dbReference>
<dbReference type="InterPro" id="IPR001679">
    <property type="entry name" value="DNA_ligase"/>
</dbReference>
<dbReference type="InterPro" id="IPR018239">
    <property type="entry name" value="DNA_ligase_AS"/>
</dbReference>
<dbReference type="InterPro" id="IPR033136">
    <property type="entry name" value="DNA_ligase_CS"/>
</dbReference>
<dbReference type="InterPro" id="IPR013839">
    <property type="entry name" value="DNAligase_adenylation"/>
</dbReference>
<dbReference type="InterPro" id="IPR013840">
    <property type="entry name" value="DNAligase_N"/>
</dbReference>
<dbReference type="InterPro" id="IPR012340">
    <property type="entry name" value="NA-bd_OB-fold"/>
</dbReference>
<dbReference type="InterPro" id="IPR004150">
    <property type="entry name" value="NAD_DNA_ligase_OB"/>
</dbReference>
<dbReference type="InterPro" id="IPR010994">
    <property type="entry name" value="RuvA_2-like"/>
</dbReference>
<dbReference type="InterPro" id="IPR004149">
    <property type="entry name" value="Znf_DNAligase_C4"/>
</dbReference>
<dbReference type="NCBIfam" id="TIGR00575">
    <property type="entry name" value="dnlj"/>
    <property type="match status" value="1"/>
</dbReference>
<dbReference type="NCBIfam" id="NF005932">
    <property type="entry name" value="PRK07956.1"/>
    <property type="match status" value="1"/>
</dbReference>
<dbReference type="PANTHER" id="PTHR23389">
    <property type="entry name" value="CHROMOSOME TRANSMISSION FIDELITY FACTOR 18"/>
    <property type="match status" value="1"/>
</dbReference>
<dbReference type="PANTHER" id="PTHR23389:SF9">
    <property type="entry name" value="DNA LIGASE"/>
    <property type="match status" value="1"/>
</dbReference>
<dbReference type="Pfam" id="PF00533">
    <property type="entry name" value="BRCT"/>
    <property type="match status" value="1"/>
</dbReference>
<dbReference type="Pfam" id="PF01653">
    <property type="entry name" value="DNA_ligase_aden"/>
    <property type="match status" value="1"/>
</dbReference>
<dbReference type="Pfam" id="PF03120">
    <property type="entry name" value="DNA_ligase_OB"/>
    <property type="match status" value="1"/>
</dbReference>
<dbReference type="Pfam" id="PF03119">
    <property type="entry name" value="DNA_ligase_ZBD"/>
    <property type="match status" value="1"/>
</dbReference>
<dbReference type="Pfam" id="PF12826">
    <property type="entry name" value="HHH_2"/>
    <property type="match status" value="1"/>
</dbReference>
<dbReference type="PIRSF" id="PIRSF001604">
    <property type="entry name" value="LigA"/>
    <property type="match status" value="1"/>
</dbReference>
<dbReference type="SMART" id="SM00292">
    <property type="entry name" value="BRCT"/>
    <property type="match status" value="1"/>
</dbReference>
<dbReference type="SMART" id="SM00532">
    <property type="entry name" value="LIGANc"/>
    <property type="match status" value="1"/>
</dbReference>
<dbReference type="SUPFAM" id="SSF52113">
    <property type="entry name" value="BRCT domain"/>
    <property type="match status" value="1"/>
</dbReference>
<dbReference type="SUPFAM" id="SSF56091">
    <property type="entry name" value="DNA ligase/mRNA capping enzyme, catalytic domain"/>
    <property type="match status" value="1"/>
</dbReference>
<dbReference type="SUPFAM" id="SSF50249">
    <property type="entry name" value="Nucleic acid-binding proteins"/>
    <property type="match status" value="1"/>
</dbReference>
<dbReference type="SUPFAM" id="SSF47781">
    <property type="entry name" value="RuvA domain 2-like"/>
    <property type="match status" value="1"/>
</dbReference>
<dbReference type="PROSITE" id="PS50172">
    <property type="entry name" value="BRCT"/>
    <property type="match status" value="1"/>
</dbReference>
<dbReference type="PROSITE" id="PS01055">
    <property type="entry name" value="DNA_LIGASE_N1"/>
    <property type="match status" value="1"/>
</dbReference>
<dbReference type="PROSITE" id="PS01056">
    <property type="entry name" value="DNA_LIGASE_N2"/>
    <property type="match status" value="1"/>
</dbReference>
<name>DNLJ_LACJO</name>
<gene>
    <name evidence="1" type="primary">ligA</name>
    <name type="ordered locus">LJ_1720</name>
</gene>
<proteinExistence type="inferred from homology"/>